<name>SPC25_NEUCR</name>
<accession>Q873B7</accession>
<accession>A7UWW1</accession>
<accession>Q7SCC6</accession>
<sequence length="259" mass="30198">MSRKSVMSSTFEPSLSTSRQPLGPSLADTLPSINFGFDELRDRMAKFTAKFDAFIEQGRKRVLEERNQFRMNVAELQEDQRMKKKDIEILQLKTNTYQQTMAKEAAETREMQAAIASLTEQRDKQAAMRDALKEQIAATQREIDARLAAQRAHAAQLEAQARYNVPELDFWVTNLCMRIEGAGAEDRLKFVYTHIDERNWEREAWFELSMSGRDYDVRHCRPKLEREKVEKVLDRVNETRELVVLLKGMRELFVEAMKS</sequence>
<proteinExistence type="inferred from homology"/>
<organism>
    <name type="scientific">Neurospora crassa (strain ATCC 24698 / 74-OR23-1A / CBS 708.71 / DSM 1257 / FGSC 987)</name>
    <dbReference type="NCBI Taxonomy" id="367110"/>
    <lineage>
        <taxon>Eukaryota</taxon>
        <taxon>Fungi</taxon>
        <taxon>Dikarya</taxon>
        <taxon>Ascomycota</taxon>
        <taxon>Pezizomycotina</taxon>
        <taxon>Sordariomycetes</taxon>
        <taxon>Sordariomycetidae</taxon>
        <taxon>Sordariales</taxon>
        <taxon>Sordariaceae</taxon>
        <taxon>Neurospora</taxon>
    </lineage>
</organism>
<comment type="function">
    <text evidence="1">Acts as a component of the essential kinetochore-associated NDC80 complex, which is required for chromosome segregation and spindle checkpoint activity.</text>
</comment>
<comment type="subunit">
    <text evidence="1">Component of the NDC80 complex, which consists of kpr-1/ndc80, kpr-2/nuf2, kpr-3/spc24 and kpr-4/spc25.</text>
</comment>
<comment type="subcellular location">
    <subcellularLocation>
        <location evidence="1">Nucleus</location>
    </subcellularLocation>
    <subcellularLocation>
        <location evidence="1">Chromosome</location>
        <location evidence="1">Centromere</location>
        <location evidence="1">Kinetochore</location>
    </subcellularLocation>
    <text evidence="1">Associated with kinetochores.</text>
</comment>
<comment type="similarity">
    <text evidence="4">Belongs to the SPC25 family.</text>
</comment>
<keyword id="KW-0131">Cell cycle</keyword>
<keyword id="KW-0132">Cell division</keyword>
<keyword id="KW-0137">Centromere</keyword>
<keyword id="KW-0158">Chromosome</keyword>
<keyword id="KW-0175">Coiled coil</keyword>
<keyword id="KW-0995">Kinetochore</keyword>
<keyword id="KW-0498">Mitosis</keyword>
<keyword id="KW-0539">Nucleus</keyword>
<keyword id="KW-1185">Reference proteome</keyword>
<gene>
    <name type="primary">kpr-4</name>
    <name type="synonym">spc25</name>
    <name type="ORF">B24N11.070</name>
    <name type="ORF">NCU06753</name>
    <name type="ORF">NCU11159</name>
</gene>
<dbReference type="EMBL" id="BX284751">
    <property type="protein sequence ID" value="CAD70393.1"/>
    <property type="molecule type" value="Genomic_DNA"/>
</dbReference>
<dbReference type="EMBL" id="CM002237">
    <property type="protein sequence ID" value="EDO65069.1"/>
    <property type="molecule type" value="Genomic_DNA"/>
</dbReference>
<dbReference type="RefSeq" id="XP_001728160.1">
    <property type="nucleotide sequence ID" value="XM_001728108.2"/>
</dbReference>
<dbReference type="SMR" id="Q873B7"/>
<dbReference type="STRING" id="367110.Q873B7"/>
<dbReference type="PaxDb" id="5141-EFNCRP00000006798"/>
<dbReference type="EnsemblFungi" id="EDO65069">
    <property type="protein sequence ID" value="EDO65069"/>
    <property type="gene ID" value="NCU11159"/>
</dbReference>
<dbReference type="GeneID" id="5847309"/>
<dbReference type="KEGG" id="ncr:NCU11159"/>
<dbReference type="VEuPathDB" id="FungiDB:NCU11159"/>
<dbReference type="HOGENOM" id="CLU_065188_0_0_1"/>
<dbReference type="InParanoid" id="Q873B7"/>
<dbReference type="OMA" id="HEDQRMK"/>
<dbReference type="OrthoDB" id="4056921at2759"/>
<dbReference type="Proteomes" id="UP000001805">
    <property type="component" value="Chromosome 6, Linkage Group II"/>
</dbReference>
<dbReference type="GO" id="GO:0031262">
    <property type="term" value="C:Ndc80 complex"/>
    <property type="evidence" value="ECO:0000250"/>
    <property type="project" value="UniProtKB"/>
</dbReference>
<dbReference type="GO" id="GO:0005634">
    <property type="term" value="C:nucleus"/>
    <property type="evidence" value="ECO:0007669"/>
    <property type="project" value="UniProtKB-SubCell"/>
</dbReference>
<dbReference type="GO" id="GO:0051301">
    <property type="term" value="P:cell division"/>
    <property type="evidence" value="ECO:0007669"/>
    <property type="project" value="UniProtKB-KW"/>
</dbReference>
<dbReference type="GO" id="GO:0007059">
    <property type="term" value="P:chromosome segregation"/>
    <property type="evidence" value="ECO:0000318"/>
    <property type="project" value="GO_Central"/>
</dbReference>
<dbReference type="CDD" id="cd23784">
    <property type="entry name" value="RWD_Spc25"/>
    <property type="match status" value="1"/>
</dbReference>
<dbReference type="FunFam" id="3.30.457.50:FF:000001">
    <property type="entry name" value="Probable kinetochore protein spc25"/>
    <property type="match status" value="1"/>
</dbReference>
<dbReference type="Gene3D" id="3.30.457.50">
    <property type="entry name" value="Chromosome segregation protein Spc25"/>
    <property type="match status" value="1"/>
</dbReference>
<dbReference type="InterPro" id="IPR045143">
    <property type="entry name" value="Spc25"/>
</dbReference>
<dbReference type="InterPro" id="IPR013255">
    <property type="entry name" value="Spc25_C"/>
</dbReference>
<dbReference type="PANTHER" id="PTHR14281:SF0">
    <property type="entry name" value="KINETOCHORE PROTEIN SPC25"/>
    <property type="match status" value="1"/>
</dbReference>
<dbReference type="PANTHER" id="PTHR14281">
    <property type="entry name" value="KINETOCHORE PROTEIN SPC25-RELATED"/>
    <property type="match status" value="1"/>
</dbReference>
<dbReference type="Pfam" id="PF08234">
    <property type="entry name" value="Spindle_Spc25"/>
    <property type="match status" value="1"/>
</dbReference>
<protein>
    <recommendedName>
        <fullName>Probable kinetochore protein spc25</fullName>
    </recommendedName>
    <alternativeName>
        <fullName>Kinetochore protein 4</fullName>
    </alternativeName>
</protein>
<feature type="chain" id="PRO_0000246678" description="Probable kinetochore protein spc25">
    <location>
        <begin position="1"/>
        <end position="259"/>
    </location>
</feature>
<feature type="region of interest" description="Disordered" evidence="3">
    <location>
        <begin position="1"/>
        <end position="25"/>
    </location>
</feature>
<feature type="coiled-coil region" evidence="2">
    <location>
        <begin position="59"/>
        <end position="162"/>
    </location>
</feature>
<feature type="compositionally biased region" description="Polar residues" evidence="3">
    <location>
        <begin position="1"/>
        <end position="20"/>
    </location>
</feature>
<evidence type="ECO:0000250" key="1"/>
<evidence type="ECO:0000255" key="2"/>
<evidence type="ECO:0000256" key="3">
    <source>
        <dbReference type="SAM" id="MobiDB-lite"/>
    </source>
</evidence>
<evidence type="ECO:0000305" key="4"/>
<reference key="1">
    <citation type="journal article" date="2003" name="Nucleic Acids Res.">
        <title>What's in the genome of a filamentous fungus? Analysis of the Neurospora genome sequence.</title>
        <authorList>
            <person name="Mannhaupt G."/>
            <person name="Montrone C."/>
            <person name="Haase D."/>
            <person name="Mewes H.-W."/>
            <person name="Aign V."/>
            <person name="Hoheisel J.D."/>
            <person name="Fartmann B."/>
            <person name="Nyakatura G."/>
            <person name="Kempken F."/>
            <person name="Maier J."/>
            <person name="Schulte U."/>
        </authorList>
    </citation>
    <scope>NUCLEOTIDE SEQUENCE [LARGE SCALE GENOMIC DNA]</scope>
    <source>
        <strain>ATCC 24698 / 74-OR23-1A / CBS 708.71 / DSM 1257 / FGSC 987</strain>
    </source>
</reference>
<reference key="2">
    <citation type="journal article" date="2003" name="Nature">
        <title>The genome sequence of the filamentous fungus Neurospora crassa.</title>
        <authorList>
            <person name="Galagan J.E."/>
            <person name="Calvo S.E."/>
            <person name="Borkovich K.A."/>
            <person name="Selker E.U."/>
            <person name="Read N.D."/>
            <person name="Jaffe D.B."/>
            <person name="FitzHugh W."/>
            <person name="Ma L.-J."/>
            <person name="Smirnov S."/>
            <person name="Purcell S."/>
            <person name="Rehman B."/>
            <person name="Elkins T."/>
            <person name="Engels R."/>
            <person name="Wang S."/>
            <person name="Nielsen C.B."/>
            <person name="Butler J."/>
            <person name="Endrizzi M."/>
            <person name="Qui D."/>
            <person name="Ianakiev P."/>
            <person name="Bell-Pedersen D."/>
            <person name="Nelson M.A."/>
            <person name="Werner-Washburne M."/>
            <person name="Selitrennikoff C.P."/>
            <person name="Kinsey J.A."/>
            <person name="Braun E.L."/>
            <person name="Zelter A."/>
            <person name="Schulte U."/>
            <person name="Kothe G.O."/>
            <person name="Jedd G."/>
            <person name="Mewes H.-W."/>
            <person name="Staben C."/>
            <person name="Marcotte E."/>
            <person name="Greenberg D."/>
            <person name="Roy A."/>
            <person name="Foley K."/>
            <person name="Naylor J."/>
            <person name="Stange-Thomann N."/>
            <person name="Barrett R."/>
            <person name="Gnerre S."/>
            <person name="Kamal M."/>
            <person name="Kamvysselis M."/>
            <person name="Mauceli E.W."/>
            <person name="Bielke C."/>
            <person name="Rudd S."/>
            <person name="Frishman D."/>
            <person name="Krystofova S."/>
            <person name="Rasmussen C."/>
            <person name="Metzenberg R.L."/>
            <person name="Perkins D.D."/>
            <person name="Kroken S."/>
            <person name="Cogoni C."/>
            <person name="Macino G."/>
            <person name="Catcheside D.E.A."/>
            <person name="Li W."/>
            <person name="Pratt R.J."/>
            <person name="Osmani S.A."/>
            <person name="DeSouza C.P.C."/>
            <person name="Glass N.L."/>
            <person name="Orbach M.J."/>
            <person name="Berglund J.A."/>
            <person name="Voelker R."/>
            <person name="Yarden O."/>
            <person name="Plamann M."/>
            <person name="Seiler S."/>
            <person name="Dunlap J.C."/>
            <person name="Radford A."/>
            <person name="Aramayo R."/>
            <person name="Natvig D.O."/>
            <person name="Alex L.A."/>
            <person name="Mannhaupt G."/>
            <person name="Ebbole D.J."/>
            <person name="Freitag M."/>
            <person name="Paulsen I."/>
            <person name="Sachs M.S."/>
            <person name="Lander E.S."/>
            <person name="Nusbaum C."/>
            <person name="Birren B.W."/>
        </authorList>
    </citation>
    <scope>NUCLEOTIDE SEQUENCE [LARGE SCALE GENOMIC DNA]</scope>
    <source>
        <strain>ATCC 24698 / 74-OR23-1A / CBS 708.71 / DSM 1257 / FGSC 987</strain>
    </source>
</reference>